<geneLocation type="chloroplast"/>
<dbReference type="EMBL" id="AE009947">
    <property type="protein sequence ID" value="AAT44688.1"/>
    <property type="molecule type" value="Genomic_DNA"/>
</dbReference>
<dbReference type="SMR" id="Q6L3A4"/>
<dbReference type="GO" id="GO:0009507">
    <property type="term" value="C:chloroplast"/>
    <property type="evidence" value="ECO:0007669"/>
    <property type="project" value="UniProtKB-SubCell"/>
</dbReference>
<dbReference type="GO" id="GO:0005763">
    <property type="term" value="C:mitochondrial small ribosomal subunit"/>
    <property type="evidence" value="ECO:0007669"/>
    <property type="project" value="TreeGrafter"/>
</dbReference>
<dbReference type="GO" id="GO:0003735">
    <property type="term" value="F:structural constituent of ribosome"/>
    <property type="evidence" value="ECO:0007669"/>
    <property type="project" value="InterPro"/>
</dbReference>
<dbReference type="GO" id="GO:0006412">
    <property type="term" value="P:translation"/>
    <property type="evidence" value="ECO:0007669"/>
    <property type="project" value="UniProtKB-UniRule"/>
</dbReference>
<dbReference type="CDD" id="cd01425">
    <property type="entry name" value="RPS2"/>
    <property type="match status" value="1"/>
</dbReference>
<dbReference type="FunFam" id="1.10.287.610:FF:000001">
    <property type="entry name" value="30S ribosomal protein S2"/>
    <property type="match status" value="1"/>
</dbReference>
<dbReference type="Gene3D" id="3.40.50.10490">
    <property type="entry name" value="Glucose-6-phosphate isomerase like protein, domain 1"/>
    <property type="match status" value="1"/>
</dbReference>
<dbReference type="Gene3D" id="1.10.287.610">
    <property type="entry name" value="Helix hairpin bin"/>
    <property type="match status" value="1"/>
</dbReference>
<dbReference type="HAMAP" id="MF_00291_B">
    <property type="entry name" value="Ribosomal_uS2_B"/>
    <property type="match status" value="1"/>
</dbReference>
<dbReference type="InterPro" id="IPR001865">
    <property type="entry name" value="Ribosomal_uS2"/>
</dbReference>
<dbReference type="InterPro" id="IPR005706">
    <property type="entry name" value="Ribosomal_uS2_bac/mit/plastid"/>
</dbReference>
<dbReference type="InterPro" id="IPR018130">
    <property type="entry name" value="Ribosomal_uS2_CS"/>
</dbReference>
<dbReference type="InterPro" id="IPR023591">
    <property type="entry name" value="Ribosomal_uS2_flav_dom_sf"/>
</dbReference>
<dbReference type="NCBIfam" id="TIGR01011">
    <property type="entry name" value="rpsB_bact"/>
    <property type="match status" value="1"/>
</dbReference>
<dbReference type="PANTHER" id="PTHR12534">
    <property type="entry name" value="30S RIBOSOMAL PROTEIN S2 PROKARYOTIC AND ORGANELLAR"/>
    <property type="match status" value="1"/>
</dbReference>
<dbReference type="PANTHER" id="PTHR12534:SF0">
    <property type="entry name" value="SMALL RIBOSOMAL SUBUNIT PROTEIN US2M"/>
    <property type="match status" value="1"/>
</dbReference>
<dbReference type="Pfam" id="PF00318">
    <property type="entry name" value="Ribosomal_S2"/>
    <property type="match status" value="1"/>
</dbReference>
<dbReference type="PRINTS" id="PR00395">
    <property type="entry name" value="RIBOSOMALS2"/>
</dbReference>
<dbReference type="SUPFAM" id="SSF52313">
    <property type="entry name" value="Ribosomal protein S2"/>
    <property type="match status" value="1"/>
</dbReference>
<dbReference type="PROSITE" id="PS00962">
    <property type="entry name" value="RIBOSOMAL_S2_1"/>
    <property type="match status" value="1"/>
</dbReference>
<dbReference type="PROSITE" id="PS00963">
    <property type="entry name" value="RIBOSOMAL_S2_2"/>
    <property type="match status" value="1"/>
</dbReference>
<protein>
    <recommendedName>
        <fullName evidence="1">Small ribosomal subunit protein uS2c</fullName>
    </recommendedName>
    <alternativeName>
        <fullName>30S ribosomal protein S2, chloroplastic</fullName>
    </alternativeName>
</protein>
<reference key="1">
    <citation type="journal article" date="2004" name="Curr. Genet.">
        <title>Structural features and transcript-editing analysis of sugarcane (Saccharum officinarum L.) chloroplast genome.</title>
        <authorList>
            <person name="Calsa T. Jr."/>
            <person name="Carraro D.M."/>
            <person name="Benatti M.R."/>
            <person name="Barbosa A.C."/>
            <person name="Kitajima J.P."/>
            <person name="Carrer H."/>
        </authorList>
    </citation>
    <scope>NUCLEOTIDE SEQUENCE [LARGE SCALE GENOMIC DNA]</scope>
    <source>
        <strain>cv. SP-80-3280</strain>
    </source>
</reference>
<organism>
    <name type="scientific">Saccharum hybrid</name>
    <name type="common">Sugarcane</name>
    <dbReference type="NCBI Taxonomy" id="15819"/>
    <lineage>
        <taxon>Eukaryota</taxon>
        <taxon>Viridiplantae</taxon>
        <taxon>Streptophyta</taxon>
        <taxon>Embryophyta</taxon>
        <taxon>Tracheophyta</taxon>
        <taxon>Spermatophyta</taxon>
        <taxon>Magnoliopsida</taxon>
        <taxon>Liliopsida</taxon>
        <taxon>Poales</taxon>
        <taxon>Poaceae</taxon>
        <taxon>PACMAD clade</taxon>
        <taxon>Panicoideae</taxon>
        <taxon>Andropogonodae</taxon>
        <taxon>Andropogoneae</taxon>
        <taxon>Saccharinae</taxon>
        <taxon>Saccharum</taxon>
    </lineage>
</organism>
<sequence>MTRRYWNINLKEMIEAGVHFGHGIKKWNPKMAPYISAKRKGTHITNLARTARFLSEACDLVFDAASQGKSFLIVGTKKRAADLVASAAIRSRCHYVNKKWFSGMLTNWSITKTRLSQFRDLRAEEKMGKFHHLPKRDAAILKRKLSTLQRYLGGIKYMTRLPDIVIVLDQQKEYIALRECAILGIPTISLVDTNCDPDLANISIPANDDTMTSIRLILNKLVFAISEGRSLYIRNR</sequence>
<feature type="chain" id="PRO_0000226932" description="Small ribosomal subunit protein uS2c">
    <location>
        <begin position="1"/>
        <end position="236"/>
    </location>
</feature>
<accession>Q6L3A4</accession>
<keyword id="KW-0150">Chloroplast</keyword>
<keyword id="KW-0934">Plastid</keyword>
<keyword id="KW-0687">Ribonucleoprotein</keyword>
<keyword id="KW-0689">Ribosomal protein</keyword>
<name>RR2_SACHY</name>
<gene>
    <name type="primary">rps2</name>
    <name type="ordered locus">PS109</name>
</gene>
<proteinExistence type="inferred from homology"/>
<comment type="subcellular location">
    <subcellularLocation>
        <location>Plastid</location>
        <location>Chloroplast</location>
    </subcellularLocation>
</comment>
<comment type="similarity">
    <text evidence="1">Belongs to the universal ribosomal protein uS2 family.</text>
</comment>
<evidence type="ECO:0000305" key="1"/>